<protein>
    <recommendedName>
        <fullName>UPF0460 protein in nifX 3'region</fullName>
    </recommendedName>
    <alternativeName>
        <fullName>ORF4</fullName>
    </alternativeName>
</protein>
<keyword id="KW-0535">Nitrogen fixation</keyword>
<feature type="chain" id="PRO_0000066334" description="UPF0460 protein in nifX 3'region">
    <location>
        <begin position="1"/>
        <end position="156"/>
    </location>
</feature>
<sequence length="156" mass="17469">MTMTLDAARGGEMVESPFLAQLVAVIRAEDSHGLWDDKTNSEILREFIVTAEERRSMPIIGDPDPELIWRMTKFYDAIGLLVEKRTGCMASQMQKMHHEGFGRVVLIAGKLVVVSKHLRDVHRFGFETWAKLAEAGEKLVESAVATINEFPEAARA</sequence>
<organism>
    <name type="scientific">Rhodobacter capsulatus</name>
    <name type="common">Rhodopseudomonas capsulata</name>
    <dbReference type="NCBI Taxonomy" id="1061"/>
    <lineage>
        <taxon>Bacteria</taxon>
        <taxon>Pseudomonadati</taxon>
        <taxon>Pseudomonadota</taxon>
        <taxon>Alphaproteobacteria</taxon>
        <taxon>Rhodobacterales</taxon>
        <taxon>Rhodobacter group</taxon>
        <taxon>Rhodobacter</taxon>
    </lineage>
</organism>
<name>YNIX_RHOCA</name>
<evidence type="ECO:0000305" key="1"/>
<accession>P25015</accession>
<accession>Q6LDQ5</accession>
<reference key="1">
    <citation type="journal article" date="1989" name="Mol. Gen. Genet.">
        <title>DNA sequence and genetic analysis of the Rhodobacter capsulatus nifENX gene region: homology between NifX and NifB suggests involvement of NifX in processing of the iron-molybdenum cofactor.</title>
        <authorList>
            <person name="Moreno-Vivian C."/>
            <person name="Schmehl M."/>
            <person name="Masepohl B."/>
            <person name="Arnold W."/>
            <person name="Klipp W."/>
        </authorList>
    </citation>
    <scope>NUCLEOTIDE SEQUENCE [GENOMIC DNA]</scope>
</reference>
<reference key="2">
    <citation type="journal article" date="1989" name="J. Bacteriol.">
        <title>Open reading frame 5 (ORF5), encoding a ferredoxinlike protein, and nifQ are cotranscribed with nifE, nifN, nifX, and ORF4 in Rhodobacter capsulatus.</title>
        <authorList>
            <person name="Moreno-Vivian C."/>
            <person name="Hennecke S."/>
            <person name="Puehler A."/>
            <person name="Klipp W."/>
        </authorList>
    </citation>
    <scope>NUCLEOTIDE SEQUENCE [GENOMIC DNA] OF 149-156</scope>
</reference>
<proteinExistence type="inferred from homology"/>
<comment type="similarity">
    <text evidence="1">Belongs to the UPF0460 family.</text>
</comment>
<dbReference type="EMBL" id="X17433">
    <property type="protein sequence ID" value="CAA35475.1"/>
    <property type="molecule type" value="Genomic_DNA"/>
</dbReference>
<dbReference type="EMBL" id="M26323">
    <property type="protein sequence ID" value="AAA26145.1"/>
    <property type="molecule type" value="Genomic_DNA"/>
</dbReference>
<dbReference type="PIR" id="JE0032">
    <property type="entry name" value="JE0032"/>
</dbReference>
<dbReference type="RefSeq" id="WP_013068973.1">
    <property type="nucleotide sequence ID" value="NZ_JAOTPJ010000071.1"/>
</dbReference>
<dbReference type="SMR" id="P25015"/>
<dbReference type="GeneID" id="31492057"/>
<dbReference type="OMA" id="WRAQDTH"/>
<dbReference type="GO" id="GO:0009399">
    <property type="term" value="P:nitrogen fixation"/>
    <property type="evidence" value="ECO:0007669"/>
    <property type="project" value="UniProtKB-KW"/>
</dbReference>
<dbReference type="Gene3D" id="1.10.3100.20">
    <property type="entry name" value="Protein of unknown function DUF269"/>
    <property type="match status" value="1"/>
</dbReference>
<dbReference type="InterPro" id="IPR004952">
    <property type="entry name" value="NifX-assoc_nitrogen_fix"/>
</dbReference>
<dbReference type="NCBIfam" id="TIGR02935">
    <property type="entry name" value="NifX-associated nitrogen fixation protein"/>
    <property type="match status" value="1"/>
</dbReference>
<dbReference type="Pfam" id="PF03270">
    <property type="entry name" value="DUF269"/>
    <property type="match status" value="1"/>
</dbReference>
<dbReference type="PIRSF" id="PIRSF005788">
    <property type="entry name" value="NifK"/>
    <property type="match status" value="1"/>
</dbReference>